<sequence>MSSTPSNQNIIPIIKKESIVSLFEKGIRQDGRKLTDYRPLSITLDYAKKADGSALVKLGTTMVLAGTKLEIDKPYEDTPNQGNLIVNVELLPLAYETFEPGPPDENAIELARVVDRSLRDSKALDLTKLVIEPGKSVWTVWLDVYVLDYGGNVLDACTLASVAALYNTKVYKVEQHSNGISVNKNEVVGKLPLNYPVVTISVAKVDKYLVVDPDLDEESIMDAKISFSYTPDLKIVGIQKSGKGSMSLQDIDQAENTARSTAVKLLEELKKHLGI</sequence>
<protein>
    <recommendedName>
        <fullName evidence="1">Exosome complex component Rrp42</fullName>
    </recommendedName>
</protein>
<dbReference type="EMBL" id="Y18930">
    <property type="protein sequence ID" value="CAB57571.1"/>
    <property type="molecule type" value="Genomic_DNA"/>
</dbReference>
<dbReference type="EMBL" id="AE006641">
    <property type="protein sequence ID" value="AAK41030.1"/>
    <property type="molecule type" value="Genomic_DNA"/>
</dbReference>
<dbReference type="PIR" id="G90221">
    <property type="entry name" value="G90221"/>
</dbReference>
<dbReference type="RefSeq" id="WP_009991305.1">
    <property type="nucleotide sequence ID" value="NC_002754.1"/>
</dbReference>
<dbReference type="PDB" id="2BR2">
    <property type="method" value="X-ray"/>
    <property type="resolution" value="2.80 A"/>
    <property type="chains" value="A/C/E/G/I/K/M/O/Q/S/U/W=1-275"/>
</dbReference>
<dbReference type="PDB" id="2C37">
    <property type="method" value="X-ray"/>
    <property type="resolution" value="2.80 A"/>
    <property type="chains" value="A/C/E/G/I/K/M/O/Q/S/U/W=1-275"/>
</dbReference>
<dbReference type="PDB" id="2C38">
    <property type="method" value="X-ray"/>
    <property type="resolution" value="3.10 A"/>
    <property type="chains" value="A/C/E/G/I/K/M/O/Q/S/U/W=1-275"/>
</dbReference>
<dbReference type="PDB" id="2C39">
    <property type="method" value="X-ray"/>
    <property type="resolution" value="3.30 A"/>
    <property type="chains" value="A/C/E/G/I/K/M/O/Q/S/U/W=1-275"/>
</dbReference>
<dbReference type="PDB" id="2JE6">
    <property type="method" value="X-ray"/>
    <property type="resolution" value="1.60 A"/>
    <property type="chains" value="A=1-275"/>
</dbReference>
<dbReference type="PDB" id="2JEA">
    <property type="method" value="X-ray"/>
    <property type="resolution" value="2.33 A"/>
    <property type="chains" value="A=1-275"/>
</dbReference>
<dbReference type="PDB" id="2JEB">
    <property type="method" value="X-ray"/>
    <property type="resolution" value="2.40 A"/>
    <property type="chains" value="A=1-275"/>
</dbReference>
<dbReference type="PDB" id="3L7Z">
    <property type="method" value="X-ray"/>
    <property type="resolution" value="2.41 A"/>
    <property type="chains" value="A/D/G=1-275"/>
</dbReference>
<dbReference type="PDB" id="4BA1">
    <property type="method" value="X-ray"/>
    <property type="resolution" value="1.80 A"/>
    <property type="chains" value="A=1-275"/>
</dbReference>
<dbReference type="PDB" id="4BA2">
    <property type="method" value="X-ray"/>
    <property type="resolution" value="2.50 A"/>
    <property type="chains" value="A=1-275"/>
</dbReference>
<dbReference type="PDBsum" id="2BR2"/>
<dbReference type="PDBsum" id="2C37"/>
<dbReference type="PDBsum" id="2C38"/>
<dbReference type="PDBsum" id="2C39"/>
<dbReference type="PDBsum" id="2JE6"/>
<dbReference type="PDBsum" id="2JEA"/>
<dbReference type="PDBsum" id="2JEB"/>
<dbReference type="PDBsum" id="3L7Z"/>
<dbReference type="PDBsum" id="4BA1"/>
<dbReference type="PDBsum" id="4BA2"/>
<dbReference type="SMR" id="Q9UXC0"/>
<dbReference type="DIP" id="DIP-60492N"/>
<dbReference type="FunCoup" id="Q9UXC0">
    <property type="interactions" value="203"/>
</dbReference>
<dbReference type="IntAct" id="Q9UXC0">
    <property type="interactions" value="1"/>
</dbReference>
<dbReference type="STRING" id="273057.SSO0732"/>
<dbReference type="PaxDb" id="273057-SSO0732"/>
<dbReference type="EnsemblBacteria" id="AAK41030">
    <property type="protein sequence ID" value="AAK41030"/>
    <property type="gene ID" value="SSO0732"/>
</dbReference>
<dbReference type="GeneID" id="44129730"/>
<dbReference type="KEGG" id="sso:SSO0732"/>
<dbReference type="PATRIC" id="fig|273057.12.peg.730"/>
<dbReference type="eggNOG" id="arCOG01574">
    <property type="taxonomic scope" value="Archaea"/>
</dbReference>
<dbReference type="HOGENOM" id="CLU_038194_0_0_2"/>
<dbReference type="InParanoid" id="Q9UXC0"/>
<dbReference type="PhylomeDB" id="Q9UXC0"/>
<dbReference type="EvolutionaryTrace" id="Q9UXC0"/>
<dbReference type="Proteomes" id="UP000001974">
    <property type="component" value="Chromosome"/>
</dbReference>
<dbReference type="GO" id="GO:0000177">
    <property type="term" value="C:cytoplasmic exosome (RNase complex)"/>
    <property type="evidence" value="ECO:0000318"/>
    <property type="project" value="GO_Central"/>
</dbReference>
<dbReference type="GO" id="GO:0035925">
    <property type="term" value="F:mRNA 3'-UTR AU-rich region binding"/>
    <property type="evidence" value="ECO:0000318"/>
    <property type="project" value="GO_Central"/>
</dbReference>
<dbReference type="GO" id="GO:0016075">
    <property type="term" value="P:rRNA catabolic process"/>
    <property type="evidence" value="ECO:0000318"/>
    <property type="project" value="GO_Central"/>
</dbReference>
<dbReference type="CDD" id="cd11365">
    <property type="entry name" value="RNase_PH_archRRP42"/>
    <property type="match status" value="1"/>
</dbReference>
<dbReference type="FunFam" id="3.30.230.70:FF:000017">
    <property type="entry name" value="Exosome complex component Rrp42"/>
    <property type="match status" value="1"/>
</dbReference>
<dbReference type="Gene3D" id="3.30.230.70">
    <property type="entry name" value="GHMP Kinase, N-terminal domain"/>
    <property type="match status" value="1"/>
</dbReference>
<dbReference type="HAMAP" id="MF_00622">
    <property type="entry name" value="Exosome_Rrp42"/>
    <property type="match status" value="1"/>
</dbReference>
<dbReference type="InterPro" id="IPR001247">
    <property type="entry name" value="ExoRNase_PH_dom1"/>
</dbReference>
<dbReference type="InterPro" id="IPR015847">
    <property type="entry name" value="ExoRNase_PH_dom2"/>
</dbReference>
<dbReference type="InterPro" id="IPR036345">
    <property type="entry name" value="ExoRNase_PH_dom2_sf"/>
</dbReference>
<dbReference type="InterPro" id="IPR050590">
    <property type="entry name" value="Exosome_comp_Rrp42_subfam"/>
</dbReference>
<dbReference type="InterPro" id="IPR027408">
    <property type="entry name" value="PNPase/RNase_PH_dom_sf"/>
</dbReference>
<dbReference type="InterPro" id="IPR020568">
    <property type="entry name" value="Ribosomal_Su5_D2-typ_SF"/>
</dbReference>
<dbReference type="InterPro" id="IPR020869">
    <property type="entry name" value="Rrp42_archaea"/>
</dbReference>
<dbReference type="NCBIfam" id="NF003282">
    <property type="entry name" value="PRK04282.1-1"/>
    <property type="match status" value="1"/>
</dbReference>
<dbReference type="PANTHER" id="PTHR11097:SF8">
    <property type="entry name" value="EXOSOME COMPLEX COMPONENT RRP42"/>
    <property type="match status" value="1"/>
</dbReference>
<dbReference type="PANTHER" id="PTHR11097">
    <property type="entry name" value="EXOSOME COMPLEX EXONUCLEASE RIBOSOMAL RNA PROCESSING PROTEIN"/>
    <property type="match status" value="1"/>
</dbReference>
<dbReference type="Pfam" id="PF01138">
    <property type="entry name" value="RNase_PH"/>
    <property type="match status" value="1"/>
</dbReference>
<dbReference type="Pfam" id="PF03725">
    <property type="entry name" value="RNase_PH_C"/>
    <property type="match status" value="1"/>
</dbReference>
<dbReference type="SUPFAM" id="SSF55666">
    <property type="entry name" value="Ribonuclease PH domain 2-like"/>
    <property type="match status" value="1"/>
</dbReference>
<dbReference type="SUPFAM" id="SSF54211">
    <property type="entry name" value="Ribosomal protein S5 domain 2-like"/>
    <property type="match status" value="1"/>
</dbReference>
<evidence type="ECO:0000255" key="1">
    <source>
        <dbReference type="HAMAP-Rule" id="MF_00622"/>
    </source>
</evidence>
<evidence type="ECO:0000269" key="2">
    <source>
    </source>
</evidence>
<evidence type="ECO:0000269" key="3">
    <source>
    </source>
</evidence>
<evidence type="ECO:0000269" key="4">
    <source>
    </source>
</evidence>
<evidence type="ECO:0000269" key="5">
    <source>
    </source>
</evidence>
<evidence type="ECO:0000269" key="6">
    <source>
    </source>
</evidence>
<evidence type="ECO:0000269" key="7">
    <source>
    </source>
</evidence>
<evidence type="ECO:0007829" key="8">
    <source>
        <dbReference type="PDB" id="2C37"/>
    </source>
</evidence>
<evidence type="ECO:0007829" key="9">
    <source>
        <dbReference type="PDB" id="2C38"/>
    </source>
</evidence>
<evidence type="ECO:0007829" key="10">
    <source>
        <dbReference type="PDB" id="2JE6"/>
    </source>
</evidence>
<evidence type="ECO:0007829" key="11">
    <source>
        <dbReference type="PDB" id="2JEA"/>
    </source>
</evidence>
<evidence type="ECO:0007829" key="12">
    <source>
        <dbReference type="PDB" id="2JEB"/>
    </source>
</evidence>
<evidence type="ECO:0007829" key="13">
    <source>
        <dbReference type="PDB" id="3L7Z"/>
    </source>
</evidence>
<gene>
    <name evidence="1" type="primary">rrp42</name>
    <name type="ordered locus">SSO0732</name>
    <name type="ORF">C20_023</name>
</gene>
<organism>
    <name type="scientific">Saccharolobus solfataricus (strain ATCC 35092 / DSM 1617 / JCM 11322 / P2)</name>
    <name type="common">Sulfolobus solfataricus</name>
    <dbReference type="NCBI Taxonomy" id="273057"/>
    <lineage>
        <taxon>Archaea</taxon>
        <taxon>Thermoproteota</taxon>
        <taxon>Thermoprotei</taxon>
        <taxon>Sulfolobales</taxon>
        <taxon>Sulfolobaceae</taxon>
        <taxon>Saccharolobus</taxon>
    </lineage>
</organism>
<feature type="chain" id="PRO_0000140006" description="Exosome complex component Rrp42">
    <location>
        <begin position="1"/>
        <end position="275"/>
    </location>
</feature>
<feature type="mutagenesis site" description="Abolishes exoribonuclease activity of the complex; when associated with E-116." evidence="3">
    <original>R</original>
    <variation>E</variation>
    <location>
        <position position="112"/>
    </location>
</feature>
<feature type="mutagenesis site" description="Abolishes exoribonuclease activity of the complex; when associated with E-112." evidence="3">
    <original>R</original>
    <variation>E</variation>
    <location>
        <position position="116"/>
    </location>
</feature>
<feature type="mutagenesis site" description="Does not change activity." evidence="2">
    <original>E</original>
    <variation>A</variation>
    <location>
        <position position="218"/>
    </location>
</feature>
<feature type="helix" evidence="10">
    <location>
        <begin position="13"/>
        <end position="19"/>
    </location>
</feature>
<feature type="turn" evidence="10">
    <location>
        <begin position="20"/>
        <end position="22"/>
    </location>
</feature>
<feature type="helix" evidence="10">
    <location>
        <begin position="23"/>
        <end position="25"/>
    </location>
</feature>
<feature type="strand" evidence="9">
    <location>
        <begin position="29"/>
        <end position="31"/>
    </location>
</feature>
<feature type="strand" evidence="10">
    <location>
        <begin position="40"/>
        <end position="44"/>
    </location>
</feature>
<feature type="strand" evidence="10">
    <location>
        <begin position="50"/>
        <end position="58"/>
    </location>
</feature>
<feature type="strand" evidence="10">
    <location>
        <begin position="61"/>
        <end position="72"/>
    </location>
</feature>
<feature type="strand" evidence="8">
    <location>
        <begin position="76"/>
        <end position="78"/>
    </location>
</feature>
<feature type="strand" evidence="13">
    <location>
        <begin position="79"/>
        <end position="81"/>
    </location>
</feature>
<feature type="strand" evidence="10">
    <location>
        <begin position="83"/>
        <end position="90"/>
    </location>
</feature>
<feature type="turn" evidence="11">
    <location>
        <begin position="92"/>
        <end position="94"/>
    </location>
</feature>
<feature type="strand" evidence="12">
    <location>
        <begin position="100"/>
        <end position="102"/>
    </location>
</feature>
<feature type="helix" evidence="10">
    <location>
        <begin position="105"/>
        <end position="120"/>
    </location>
</feature>
<feature type="helix" evidence="10">
    <location>
        <begin position="126"/>
        <end position="129"/>
    </location>
</feature>
<feature type="strand" evidence="10">
    <location>
        <begin position="130"/>
        <end position="132"/>
    </location>
</feature>
<feature type="turn" evidence="10">
    <location>
        <begin position="133"/>
        <end position="135"/>
    </location>
</feature>
<feature type="strand" evidence="10">
    <location>
        <begin position="136"/>
        <end position="148"/>
    </location>
</feature>
<feature type="helix" evidence="10">
    <location>
        <begin position="153"/>
        <end position="166"/>
    </location>
</feature>
<feature type="strand" evidence="10">
    <location>
        <begin position="169"/>
        <end position="174"/>
    </location>
</feature>
<feature type="strand" evidence="10">
    <location>
        <begin position="181"/>
        <end position="190"/>
    </location>
</feature>
<feature type="strand" evidence="11">
    <location>
        <begin position="193"/>
        <end position="195"/>
    </location>
</feature>
<feature type="strand" evidence="10">
    <location>
        <begin position="198"/>
        <end position="205"/>
    </location>
</feature>
<feature type="strand" evidence="10">
    <location>
        <begin position="208"/>
        <end position="212"/>
    </location>
</feature>
<feature type="helix" evidence="10">
    <location>
        <begin position="215"/>
        <end position="220"/>
    </location>
</feature>
<feature type="strand" evidence="10">
    <location>
        <begin position="222"/>
        <end position="229"/>
    </location>
</feature>
<feature type="turn" evidence="13">
    <location>
        <begin position="231"/>
        <end position="233"/>
    </location>
</feature>
<feature type="strand" evidence="10">
    <location>
        <begin position="235"/>
        <end position="244"/>
    </location>
</feature>
<feature type="helix" evidence="10">
    <location>
        <begin position="248"/>
        <end position="273"/>
    </location>
</feature>
<proteinExistence type="evidence at protein level"/>
<name>RRP42_SACS2</name>
<accession>Q9UXC0</accession>
<keyword id="KW-0002">3D-structure</keyword>
<keyword id="KW-0963">Cytoplasm</keyword>
<keyword id="KW-0271">Exosome</keyword>
<keyword id="KW-1185">Reference proteome</keyword>
<reference key="1">
    <citation type="journal article" date="2000" name="Genome">
        <title>Gene content and organization of a 281-kbp contig from the genome of the extremely thermophilic archaeon, Sulfolobus solfataricus P2.</title>
        <authorList>
            <person name="Charlebois R.L."/>
            <person name="Singh R.K."/>
            <person name="Chan-Weiher C.C.-Y."/>
            <person name="Allard G."/>
            <person name="Chow C."/>
            <person name="Confalonieri F."/>
            <person name="Curtis B."/>
            <person name="Duguet M."/>
            <person name="Erauso G."/>
            <person name="Faguy D."/>
            <person name="Gaasterland T."/>
            <person name="Garrett R.A."/>
            <person name="Gordon P."/>
            <person name="Jeffries A.C."/>
            <person name="Kozera C."/>
            <person name="Kushwaha N."/>
            <person name="Lafleur E."/>
            <person name="Medina N."/>
            <person name="Peng X."/>
            <person name="Penny S.L."/>
            <person name="She Q."/>
            <person name="St Jean A."/>
            <person name="van der Oost J."/>
            <person name="Young F."/>
            <person name="Zivanovic Y."/>
            <person name="Doolittle W.F."/>
            <person name="Ragan M.A."/>
            <person name="Sensen C.W."/>
        </authorList>
    </citation>
    <scope>NUCLEOTIDE SEQUENCE [LARGE SCALE GENOMIC DNA]</scope>
    <source>
        <strain>ATCC 35092 / DSM 1617 / JCM 11322 / P2</strain>
    </source>
</reference>
<reference key="2">
    <citation type="journal article" date="2001" name="Proc. Natl. Acad. Sci. U.S.A.">
        <title>The complete genome of the crenarchaeon Sulfolobus solfataricus P2.</title>
        <authorList>
            <person name="She Q."/>
            <person name="Singh R.K."/>
            <person name="Confalonieri F."/>
            <person name="Zivanovic Y."/>
            <person name="Allard G."/>
            <person name="Awayez M.J."/>
            <person name="Chan-Weiher C.C.-Y."/>
            <person name="Clausen I.G."/>
            <person name="Curtis B.A."/>
            <person name="De Moors A."/>
            <person name="Erauso G."/>
            <person name="Fletcher C."/>
            <person name="Gordon P.M.K."/>
            <person name="Heikamp-de Jong I."/>
            <person name="Jeffries A.C."/>
            <person name="Kozera C.J."/>
            <person name="Medina N."/>
            <person name="Peng X."/>
            <person name="Thi-Ngoc H.P."/>
            <person name="Redder P."/>
            <person name="Schenk M.E."/>
            <person name="Theriault C."/>
            <person name="Tolstrup N."/>
            <person name="Charlebois R.L."/>
            <person name="Doolittle W.F."/>
            <person name="Duguet M."/>
            <person name="Gaasterland T."/>
            <person name="Garrett R.A."/>
            <person name="Ragan M.A."/>
            <person name="Sensen C.W."/>
            <person name="Van der Oost J."/>
        </authorList>
    </citation>
    <scope>NUCLEOTIDE SEQUENCE [LARGE SCALE GENOMIC DNA]</scope>
    <source>
        <strain>ATCC 35092 / DSM 1617 / JCM 11322 / P2</strain>
    </source>
</reference>
<reference key="3">
    <citation type="journal article" date="2003" name="EMBO Rep.">
        <title>An exosome-like complex in Sulfolobus solfataricus.</title>
        <authorList>
            <person name="Evguenieva-Hackenberg E."/>
            <person name="Walter P."/>
            <person name="Hochleitner E."/>
            <person name="Lottspeich F."/>
            <person name="Klug G."/>
        </authorList>
    </citation>
    <scope>INTERACTION WITH EXOSOME</scope>
    <source>
        <strain>ATCC 35092 / DSM 1617 / JCM 11322 / P2</strain>
    </source>
</reference>
<reference key="4">
    <citation type="journal article" date="2006" name="Mol. Microbiol.">
        <title>Characterization of native and reconstituted exosome complexes from the hyperthermophilic archaeon Sulfolobus solfataricus.</title>
        <authorList>
            <person name="Walter P."/>
            <person name="Klein F."/>
            <person name="Lorentzen E."/>
            <person name="Ilchmann A."/>
            <person name="Klug G."/>
            <person name="Evguenieva-Hackenberg E."/>
        </authorList>
    </citation>
    <scope>INTERACTION WITH EXOSOME</scope>
</reference>
<reference key="5">
    <citation type="journal article" date="2010" name="FEBS Lett.">
        <title>The evolutionarily conserved subunits Rrp4 and Csl4 confer different substrate specificities to the archaeal exosome.</title>
        <authorList>
            <person name="Roppelt V."/>
            <person name="Klug G."/>
            <person name="Evguenieva-Hackenberg E."/>
        </authorList>
    </citation>
    <scope>FUNCTION</scope>
    <scope>SUBUNIT</scope>
</reference>
<reference key="6">
    <citation type="journal article" date="2012" name="Biochimie">
        <title>Heterogeneous complexes of the RNA exosome in Sulfolobus solfataricus.</title>
        <authorList>
            <person name="Witharana C."/>
            <person name="Roppelt V."/>
            <person name="Lochnit G."/>
            <person name="Klug G."/>
            <person name="Evguenieva-Hackenberg E."/>
        </authorList>
    </citation>
    <scope>INTERACTION WITH EXOSOME</scope>
    <source>
        <strain>ATCC 35092 / DSM 1617 / JCM 11322 / P2</strain>
    </source>
</reference>
<reference key="7">
    <citation type="journal article" date="2005" name="Mol. Cell">
        <title>Structural basis of 3' end RNA recognition and exoribonucleolytic cleavage by an exosome RNase PH core.</title>
        <authorList>
            <person name="Lorentzen E."/>
            <person name="Conti E."/>
        </authorList>
    </citation>
    <scope>X-RAY CRYSTALLOGRAPHY (2.80 ANGSTROMS) IN COMPLEX WITH RRP41</scope>
    <scope>SUBUNIT</scope>
    <scope>MUTAGENESIS OF ARG-112 AND ARG-116</scope>
</reference>
<reference key="8">
    <citation type="journal article" date="2005" name="Nat. Struct. Mol. Biol.">
        <title>The archaeal exosome core is a hexameric ring structure with three catalytic subunits.</title>
        <authorList>
            <person name="Lorentzen E."/>
            <person name="Walter P."/>
            <person name="Fribourg S."/>
            <person name="Evguenieva-Hackenberg E."/>
            <person name="Klug G."/>
            <person name="Conti E."/>
        </authorList>
    </citation>
    <scope>X-RAY CRYSTALLOGRAPHY (2.80 ANGSTROMS) IN COMPLEX WITH RRP41</scope>
    <scope>FUNCTION</scope>
    <scope>SUBUNIT</scope>
    <scope>MUTAGENESIS OF GLU-218</scope>
</reference>
<reference key="9">
    <citation type="journal article" date="2007" name="EMBO Rep.">
        <title>RNA channelling by the archaeal exosome.</title>
        <authorList>
            <person name="Lorentzen E."/>
            <person name="Dziembowski A."/>
            <person name="Lindner D."/>
            <person name="Seraphin B."/>
            <person name="Conti E."/>
        </authorList>
    </citation>
    <scope>X-RAY CRYSTALLOGRAPHY (1.60 ANGSTROMS) IN COMPLEX WITH RRP41 AND RRP4</scope>
    <scope>SUBUNIT</scope>
</reference>
<reference key="10">
    <citation type="journal article" date="2010" name="PLoS ONE">
        <title>Crystal structure of the S. solfataricus archaeal exosome reveals conformational flexibility in the RNA-binding ring.</title>
        <authorList>
            <person name="Lu C."/>
            <person name="Ding F."/>
            <person name="Ke A."/>
        </authorList>
    </citation>
    <scope>X-RAY CRYSTALLOGRAPHY (2.41 ANGSTROMS) IN COMPLEX WITH RRP41 AND RRP4</scope>
</reference>
<reference key="11">
    <citation type="journal article" date="2012" name="Archaea">
        <title>Crystal structure of a 9-subunit archaeal exosome in pre-catalytic states of the phosphorolytic reaction.</title>
        <authorList>
            <person name="Lorentzen E."/>
            <person name="Conti E."/>
        </authorList>
    </citation>
    <scope>X-RAY CRYSTALLOGRAPHY (1.80 ANGSTROMS) IN COMPLEX WITH RRP41 AND RRP4</scope>
    <scope>SUBUNIT</scope>
</reference>
<comment type="function">
    <text evidence="1 2 6">Non-catalytic component of the exosome, which is a complex involved in RNA degradation. Contributes to the structuring of the Rrp41 active site.</text>
</comment>
<comment type="subunit">
    <text evidence="1 2 3 4 5 6 7">Component of the archaeal exosome complex. Forms a hexameric ring-like arrangement composed of 3 Rrp41-Rrp42 heterodimers. The hexameric ring associates with a trimer of Rrp4 and/or Csl4 subunits.</text>
</comment>
<comment type="interaction">
    <interactant intactId="EBI-9009550">
        <id>Q9UXC0</id>
    </interactant>
    <interactant intactId="EBI-7981302">
        <id>Q9UXC2</id>
        <label>rrp41</label>
    </interactant>
    <organismsDiffer>false</organismsDiffer>
    <experiments>3</experiments>
</comment>
<comment type="subcellular location">
    <subcellularLocation>
        <location evidence="1">Cytoplasm</location>
    </subcellularLocation>
</comment>
<comment type="similarity">
    <text evidence="1">Belongs to the RNase PH family. Rrp42 subfamily.</text>
</comment>